<organism>
    <name type="scientific">Chelativorans sp. (strain BNC1)</name>
    <dbReference type="NCBI Taxonomy" id="266779"/>
    <lineage>
        <taxon>Bacteria</taxon>
        <taxon>Pseudomonadati</taxon>
        <taxon>Pseudomonadota</taxon>
        <taxon>Alphaproteobacteria</taxon>
        <taxon>Hyphomicrobiales</taxon>
        <taxon>Phyllobacteriaceae</taxon>
        <taxon>Chelativorans</taxon>
    </lineage>
</organism>
<evidence type="ECO:0000255" key="1">
    <source>
        <dbReference type="HAMAP-Rule" id="MF_01350"/>
    </source>
</evidence>
<accession>Q11JJ9</accession>
<protein>
    <recommendedName>
        <fullName evidence="1">NADH-quinone oxidoreductase subunit H</fullName>
        <ecNumber evidence="1">7.1.1.-</ecNumber>
    </recommendedName>
    <alternativeName>
        <fullName evidence="1">NADH dehydrogenase I subunit H</fullName>
    </alternativeName>
    <alternativeName>
        <fullName evidence="1">NDH-1 subunit H</fullName>
    </alternativeName>
</protein>
<comment type="function">
    <text evidence="1">NDH-1 shuttles electrons from NADH, via FMN and iron-sulfur (Fe-S) centers, to quinones in the respiratory chain. The immediate electron acceptor for the enzyme in this species is believed to be ubiquinone. Couples the redox reaction to proton translocation (for every two electrons transferred, four hydrogen ions are translocated across the cytoplasmic membrane), and thus conserves the redox energy in a proton gradient. This subunit may bind ubiquinone.</text>
</comment>
<comment type="catalytic activity">
    <reaction evidence="1">
        <text>a quinone + NADH + 5 H(+)(in) = a quinol + NAD(+) + 4 H(+)(out)</text>
        <dbReference type="Rhea" id="RHEA:57888"/>
        <dbReference type="ChEBI" id="CHEBI:15378"/>
        <dbReference type="ChEBI" id="CHEBI:24646"/>
        <dbReference type="ChEBI" id="CHEBI:57540"/>
        <dbReference type="ChEBI" id="CHEBI:57945"/>
        <dbReference type="ChEBI" id="CHEBI:132124"/>
    </reaction>
</comment>
<comment type="subunit">
    <text evidence="1">NDH-1 is composed of 14 different subunits. Subunits NuoA, H, J, K, L, M, N constitute the membrane sector of the complex.</text>
</comment>
<comment type="subcellular location">
    <subcellularLocation>
        <location evidence="1">Cell inner membrane</location>
        <topology evidence="1">Multi-pass membrane protein</topology>
    </subcellularLocation>
</comment>
<comment type="similarity">
    <text evidence="1">Belongs to the complex I subunit 1 family.</text>
</comment>
<feature type="chain" id="PRO_0000298824" description="NADH-quinone oxidoreductase subunit H">
    <location>
        <begin position="1"/>
        <end position="347"/>
    </location>
</feature>
<feature type="transmembrane region" description="Helical" evidence="1">
    <location>
        <begin position="13"/>
        <end position="33"/>
    </location>
</feature>
<feature type="transmembrane region" description="Helical" evidence="1">
    <location>
        <begin position="50"/>
        <end position="70"/>
    </location>
</feature>
<feature type="transmembrane region" description="Helical" evidence="1">
    <location>
        <begin position="82"/>
        <end position="102"/>
    </location>
</feature>
<feature type="transmembrane region" description="Helical" evidence="1">
    <location>
        <begin position="115"/>
        <end position="135"/>
    </location>
</feature>
<feature type="transmembrane region" description="Helical" evidence="1">
    <location>
        <begin position="161"/>
        <end position="181"/>
    </location>
</feature>
<feature type="transmembrane region" description="Helical" evidence="1">
    <location>
        <begin position="198"/>
        <end position="218"/>
    </location>
</feature>
<feature type="transmembrane region" description="Helical" evidence="1">
    <location>
        <begin position="248"/>
        <end position="268"/>
    </location>
</feature>
<feature type="transmembrane region" description="Helical" evidence="1">
    <location>
        <begin position="286"/>
        <end position="306"/>
    </location>
</feature>
<feature type="transmembrane region" description="Helical" evidence="1">
    <location>
        <begin position="321"/>
        <end position="341"/>
    </location>
</feature>
<proteinExistence type="inferred from homology"/>
<dbReference type="EC" id="7.1.1.-" evidence="1"/>
<dbReference type="EMBL" id="CP000390">
    <property type="protein sequence ID" value="ABG62426.1"/>
    <property type="molecule type" value="Genomic_DNA"/>
</dbReference>
<dbReference type="SMR" id="Q11JJ9"/>
<dbReference type="STRING" id="266779.Meso_1029"/>
<dbReference type="KEGG" id="mes:Meso_1029"/>
<dbReference type="eggNOG" id="COG1005">
    <property type="taxonomic scope" value="Bacteria"/>
</dbReference>
<dbReference type="HOGENOM" id="CLU_015134_0_1_5"/>
<dbReference type="OrthoDB" id="9803734at2"/>
<dbReference type="GO" id="GO:0005886">
    <property type="term" value="C:plasma membrane"/>
    <property type="evidence" value="ECO:0007669"/>
    <property type="project" value="UniProtKB-SubCell"/>
</dbReference>
<dbReference type="GO" id="GO:0003954">
    <property type="term" value="F:NADH dehydrogenase activity"/>
    <property type="evidence" value="ECO:0007669"/>
    <property type="project" value="TreeGrafter"/>
</dbReference>
<dbReference type="GO" id="GO:0016655">
    <property type="term" value="F:oxidoreductase activity, acting on NAD(P)H, quinone or similar compound as acceptor"/>
    <property type="evidence" value="ECO:0007669"/>
    <property type="project" value="UniProtKB-UniRule"/>
</dbReference>
<dbReference type="GO" id="GO:0048038">
    <property type="term" value="F:quinone binding"/>
    <property type="evidence" value="ECO:0007669"/>
    <property type="project" value="UniProtKB-KW"/>
</dbReference>
<dbReference type="GO" id="GO:0009060">
    <property type="term" value="P:aerobic respiration"/>
    <property type="evidence" value="ECO:0007669"/>
    <property type="project" value="TreeGrafter"/>
</dbReference>
<dbReference type="HAMAP" id="MF_01350">
    <property type="entry name" value="NDH1_NuoH"/>
    <property type="match status" value="1"/>
</dbReference>
<dbReference type="InterPro" id="IPR001694">
    <property type="entry name" value="NADH_UbQ_OxRdtase_su1/FPO"/>
</dbReference>
<dbReference type="InterPro" id="IPR018086">
    <property type="entry name" value="NADH_UbQ_OxRdtase_su1_CS"/>
</dbReference>
<dbReference type="NCBIfam" id="NF004745">
    <property type="entry name" value="PRK06076.1-6"/>
    <property type="match status" value="1"/>
</dbReference>
<dbReference type="PANTHER" id="PTHR11432">
    <property type="entry name" value="NADH DEHYDROGENASE SUBUNIT 1"/>
    <property type="match status" value="1"/>
</dbReference>
<dbReference type="PANTHER" id="PTHR11432:SF3">
    <property type="entry name" value="NADH-UBIQUINONE OXIDOREDUCTASE CHAIN 1"/>
    <property type="match status" value="1"/>
</dbReference>
<dbReference type="Pfam" id="PF00146">
    <property type="entry name" value="NADHdh"/>
    <property type="match status" value="1"/>
</dbReference>
<dbReference type="PROSITE" id="PS00668">
    <property type="entry name" value="COMPLEX1_ND1_2"/>
    <property type="match status" value="1"/>
</dbReference>
<name>NUOH_CHESB</name>
<sequence length="347" mass="38204">MESFVTLYVLPGLLILLKSVALIVILLVGVAYILYADRKIWAAVQLRRGPNVVGPWGLFQAFADLFKFVFKEPVIPSGANKGVFLLAPVVAAGLALAAWAVIPVSEGWAIANINVGILYVFAIASLEVYGVIMAGWASNSKYPFLGALRSAAQMVSYEVSIGFVIVTVLLAVGSLNLTDIVLSQRDGLGTMVGLPNSFLDWHWLALFPMFIIFFISALAETNRPPFDLVEAESELVAGHMIEYSSTPFLLFFLGEYVAIVLMCALTTILFLGGWLPPFDFAPFTWVPGVVWFVLKLVAVFFMFALVKSFVPRYRYDQLMRLGWKVFLPISLFMVVATAAFLKFTGLV</sequence>
<reference key="1">
    <citation type="submission" date="2006-06" db="EMBL/GenBank/DDBJ databases">
        <title>Complete sequence of chromosome of Mesorhizobium sp. BNC1.</title>
        <authorList>
            <consortium name="US DOE Joint Genome Institute"/>
            <person name="Copeland A."/>
            <person name="Lucas S."/>
            <person name="Lapidus A."/>
            <person name="Barry K."/>
            <person name="Detter J.C."/>
            <person name="Glavina del Rio T."/>
            <person name="Hammon N."/>
            <person name="Israni S."/>
            <person name="Dalin E."/>
            <person name="Tice H."/>
            <person name="Pitluck S."/>
            <person name="Chertkov O."/>
            <person name="Brettin T."/>
            <person name="Bruce D."/>
            <person name="Han C."/>
            <person name="Tapia R."/>
            <person name="Gilna P."/>
            <person name="Schmutz J."/>
            <person name="Larimer F."/>
            <person name="Land M."/>
            <person name="Hauser L."/>
            <person name="Kyrpides N."/>
            <person name="Mikhailova N."/>
            <person name="Richardson P."/>
        </authorList>
    </citation>
    <scope>NUCLEOTIDE SEQUENCE [LARGE SCALE GENOMIC DNA]</scope>
    <source>
        <strain>BNC1</strain>
    </source>
</reference>
<keyword id="KW-0997">Cell inner membrane</keyword>
<keyword id="KW-1003">Cell membrane</keyword>
<keyword id="KW-0472">Membrane</keyword>
<keyword id="KW-0520">NAD</keyword>
<keyword id="KW-0874">Quinone</keyword>
<keyword id="KW-1278">Translocase</keyword>
<keyword id="KW-0812">Transmembrane</keyword>
<keyword id="KW-1133">Transmembrane helix</keyword>
<keyword id="KW-0830">Ubiquinone</keyword>
<gene>
    <name evidence="1" type="primary">nuoH</name>
    <name type="ordered locus">Meso_1029</name>
</gene>